<dbReference type="EMBL" id="CP000946">
    <property type="protein sequence ID" value="ACA78816.1"/>
    <property type="molecule type" value="Genomic_DNA"/>
</dbReference>
<dbReference type="RefSeq" id="WP_000130305.1">
    <property type="nucleotide sequence ID" value="NZ_MTFT01000010.1"/>
</dbReference>
<dbReference type="SMR" id="B1J010"/>
<dbReference type="GeneID" id="93777016"/>
<dbReference type="KEGG" id="ecl:EcolC_3194"/>
<dbReference type="HOGENOM" id="CLU_014218_8_2_6"/>
<dbReference type="GO" id="GO:0009376">
    <property type="term" value="C:HslUV protease complex"/>
    <property type="evidence" value="ECO:0007669"/>
    <property type="project" value="TreeGrafter"/>
</dbReference>
<dbReference type="GO" id="GO:0005524">
    <property type="term" value="F:ATP binding"/>
    <property type="evidence" value="ECO:0007669"/>
    <property type="project" value="UniProtKB-UniRule"/>
</dbReference>
<dbReference type="GO" id="GO:0016887">
    <property type="term" value="F:ATP hydrolysis activity"/>
    <property type="evidence" value="ECO:0007669"/>
    <property type="project" value="InterPro"/>
</dbReference>
<dbReference type="GO" id="GO:0140662">
    <property type="term" value="F:ATP-dependent protein folding chaperone"/>
    <property type="evidence" value="ECO:0007669"/>
    <property type="project" value="InterPro"/>
</dbReference>
<dbReference type="GO" id="GO:0046983">
    <property type="term" value="F:protein dimerization activity"/>
    <property type="evidence" value="ECO:0007669"/>
    <property type="project" value="InterPro"/>
</dbReference>
<dbReference type="GO" id="GO:0051082">
    <property type="term" value="F:unfolded protein binding"/>
    <property type="evidence" value="ECO:0007669"/>
    <property type="project" value="UniProtKB-UniRule"/>
</dbReference>
<dbReference type="GO" id="GO:0008270">
    <property type="term" value="F:zinc ion binding"/>
    <property type="evidence" value="ECO:0007669"/>
    <property type="project" value="InterPro"/>
</dbReference>
<dbReference type="GO" id="GO:0051301">
    <property type="term" value="P:cell division"/>
    <property type="evidence" value="ECO:0007669"/>
    <property type="project" value="TreeGrafter"/>
</dbReference>
<dbReference type="GO" id="GO:0051603">
    <property type="term" value="P:proteolysis involved in protein catabolic process"/>
    <property type="evidence" value="ECO:0007669"/>
    <property type="project" value="TreeGrafter"/>
</dbReference>
<dbReference type="CDD" id="cd19497">
    <property type="entry name" value="RecA-like_ClpX"/>
    <property type="match status" value="1"/>
</dbReference>
<dbReference type="FunFam" id="1.10.8.60:FF:000002">
    <property type="entry name" value="ATP-dependent Clp protease ATP-binding subunit ClpX"/>
    <property type="match status" value="1"/>
</dbReference>
<dbReference type="FunFam" id="3.40.50.300:FF:000005">
    <property type="entry name" value="ATP-dependent Clp protease ATP-binding subunit ClpX"/>
    <property type="match status" value="1"/>
</dbReference>
<dbReference type="Gene3D" id="1.10.8.60">
    <property type="match status" value="1"/>
</dbReference>
<dbReference type="Gene3D" id="6.20.220.10">
    <property type="entry name" value="ClpX chaperone, C4-type zinc finger domain"/>
    <property type="match status" value="1"/>
</dbReference>
<dbReference type="Gene3D" id="3.40.50.300">
    <property type="entry name" value="P-loop containing nucleotide triphosphate hydrolases"/>
    <property type="match status" value="1"/>
</dbReference>
<dbReference type="HAMAP" id="MF_00175">
    <property type="entry name" value="ClpX"/>
    <property type="match status" value="1"/>
</dbReference>
<dbReference type="InterPro" id="IPR003593">
    <property type="entry name" value="AAA+_ATPase"/>
</dbReference>
<dbReference type="InterPro" id="IPR050052">
    <property type="entry name" value="ATP-dep_Clp_protease_ClpX"/>
</dbReference>
<dbReference type="InterPro" id="IPR003959">
    <property type="entry name" value="ATPase_AAA_core"/>
</dbReference>
<dbReference type="InterPro" id="IPR019489">
    <property type="entry name" value="Clp_ATPase_C"/>
</dbReference>
<dbReference type="InterPro" id="IPR004487">
    <property type="entry name" value="Clp_protease_ATP-bd_su_ClpX"/>
</dbReference>
<dbReference type="InterPro" id="IPR046425">
    <property type="entry name" value="ClpX_bact"/>
</dbReference>
<dbReference type="InterPro" id="IPR027417">
    <property type="entry name" value="P-loop_NTPase"/>
</dbReference>
<dbReference type="InterPro" id="IPR010603">
    <property type="entry name" value="Znf_CppX_C4"/>
</dbReference>
<dbReference type="InterPro" id="IPR038366">
    <property type="entry name" value="Znf_CppX_C4_sf"/>
</dbReference>
<dbReference type="NCBIfam" id="TIGR00382">
    <property type="entry name" value="clpX"/>
    <property type="match status" value="1"/>
</dbReference>
<dbReference type="NCBIfam" id="NF003745">
    <property type="entry name" value="PRK05342.1"/>
    <property type="match status" value="1"/>
</dbReference>
<dbReference type="PANTHER" id="PTHR48102:SF7">
    <property type="entry name" value="ATP-DEPENDENT CLP PROTEASE ATP-BINDING SUBUNIT CLPX-LIKE, MITOCHONDRIAL"/>
    <property type="match status" value="1"/>
</dbReference>
<dbReference type="PANTHER" id="PTHR48102">
    <property type="entry name" value="ATP-DEPENDENT CLP PROTEASE ATP-BINDING SUBUNIT CLPX-LIKE, MITOCHONDRIAL-RELATED"/>
    <property type="match status" value="1"/>
</dbReference>
<dbReference type="Pfam" id="PF07724">
    <property type="entry name" value="AAA_2"/>
    <property type="match status" value="1"/>
</dbReference>
<dbReference type="Pfam" id="PF10431">
    <property type="entry name" value="ClpB_D2-small"/>
    <property type="match status" value="1"/>
</dbReference>
<dbReference type="Pfam" id="PF06689">
    <property type="entry name" value="zf-C4_ClpX"/>
    <property type="match status" value="1"/>
</dbReference>
<dbReference type="SMART" id="SM00382">
    <property type="entry name" value="AAA"/>
    <property type="match status" value="1"/>
</dbReference>
<dbReference type="SMART" id="SM01086">
    <property type="entry name" value="ClpB_D2-small"/>
    <property type="match status" value="1"/>
</dbReference>
<dbReference type="SMART" id="SM00994">
    <property type="entry name" value="zf-C4_ClpX"/>
    <property type="match status" value="1"/>
</dbReference>
<dbReference type="SUPFAM" id="SSF57716">
    <property type="entry name" value="Glucocorticoid receptor-like (DNA-binding domain)"/>
    <property type="match status" value="1"/>
</dbReference>
<dbReference type="SUPFAM" id="SSF52540">
    <property type="entry name" value="P-loop containing nucleoside triphosphate hydrolases"/>
    <property type="match status" value="1"/>
</dbReference>
<dbReference type="PROSITE" id="PS51902">
    <property type="entry name" value="CLPX_ZB"/>
    <property type="match status" value="1"/>
</dbReference>
<gene>
    <name evidence="1" type="primary">clpX</name>
    <name type="ordered locus">EcolC_3194</name>
</gene>
<reference key="1">
    <citation type="submission" date="2008-02" db="EMBL/GenBank/DDBJ databases">
        <title>Complete sequence of Escherichia coli C str. ATCC 8739.</title>
        <authorList>
            <person name="Copeland A."/>
            <person name="Lucas S."/>
            <person name="Lapidus A."/>
            <person name="Glavina del Rio T."/>
            <person name="Dalin E."/>
            <person name="Tice H."/>
            <person name="Bruce D."/>
            <person name="Goodwin L."/>
            <person name="Pitluck S."/>
            <person name="Kiss H."/>
            <person name="Brettin T."/>
            <person name="Detter J.C."/>
            <person name="Han C."/>
            <person name="Kuske C.R."/>
            <person name="Schmutz J."/>
            <person name="Larimer F."/>
            <person name="Land M."/>
            <person name="Hauser L."/>
            <person name="Kyrpides N."/>
            <person name="Mikhailova N."/>
            <person name="Ingram L."/>
            <person name="Richardson P."/>
        </authorList>
    </citation>
    <scope>NUCLEOTIDE SEQUENCE [LARGE SCALE GENOMIC DNA]</scope>
    <source>
        <strain>ATCC 8739 / DSM 1576 / NBRC 3972 / NCIMB 8545 / WDCM 00012 / Crooks</strain>
    </source>
</reference>
<proteinExistence type="inferred from homology"/>
<name>CLPX_ECOLC</name>
<protein>
    <recommendedName>
        <fullName evidence="1">ATP-dependent Clp protease ATP-binding subunit ClpX</fullName>
    </recommendedName>
</protein>
<feature type="chain" id="PRO_1000077158" description="ATP-dependent Clp protease ATP-binding subunit ClpX">
    <location>
        <begin position="1"/>
        <end position="424"/>
    </location>
</feature>
<feature type="domain" description="ClpX-type ZB" evidence="2">
    <location>
        <begin position="2"/>
        <end position="56"/>
    </location>
</feature>
<feature type="binding site" evidence="2">
    <location>
        <position position="15"/>
    </location>
    <ligand>
        <name>Zn(2+)</name>
        <dbReference type="ChEBI" id="CHEBI:29105"/>
    </ligand>
</feature>
<feature type="binding site" evidence="2">
    <location>
        <position position="18"/>
    </location>
    <ligand>
        <name>Zn(2+)</name>
        <dbReference type="ChEBI" id="CHEBI:29105"/>
    </ligand>
</feature>
<feature type="binding site" evidence="2">
    <location>
        <position position="37"/>
    </location>
    <ligand>
        <name>Zn(2+)</name>
        <dbReference type="ChEBI" id="CHEBI:29105"/>
    </ligand>
</feature>
<feature type="binding site" evidence="2">
    <location>
        <position position="40"/>
    </location>
    <ligand>
        <name>Zn(2+)</name>
        <dbReference type="ChEBI" id="CHEBI:29105"/>
    </ligand>
</feature>
<feature type="binding site" evidence="1">
    <location>
        <begin position="120"/>
        <end position="127"/>
    </location>
    <ligand>
        <name>ATP</name>
        <dbReference type="ChEBI" id="CHEBI:30616"/>
    </ligand>
</feature>
<organism>
    <name type="scientific">Escherichia coli (strain ATCC 8739 / DSM 1576 / NBRC 3972 / NCIMB 8545 / WDCM 00012 / Crooks)</name>
    <dbReference type="NCBI Taxonomy" id="481805"/>
    <lineage>
        <taxon>Bacteria</taxon>
        <taxon>Pseudomonadati</taxon>
        <taxon>Pseudomonadota</taxon>
        <taxon>Gammaproteobacteria</taxon>
        <taxon>Enterobacterales</taxon>
        <taxon>Enterobacteriaceae</taxon>
        <taxon>Escherichia</taxon>
    </lineage>
</organism>
<accession>B1J010</accession>
<evidence type="ECO:0000255" key="1">
    <source>
        <dbReference type="HAMAP-Rule" id="MF_00175"/>
    </source>
</evidence>
<evidence type="ECO:0000255" key="2">
    <source>
        <dbReference type="PROSITE-ProRule" id="PRU01250"/>
    </source>
</evidence>
<keyword id="KW-0067">ATP-binding</keyword>
<keyword id="KW-0143">Chaperone</keyword>
<keyword id="KW-0479">Metal-binding</keyword>
<keyword id="KW-0547">Nucleotide-binding</keyword>
<keyword id="KW-0862">Zinc</keyword>
<sequence>MTDKRKDGSGKLLYCSFCGKSQHEVRKLIAGPSVYICDECVDLCNDIIREEIKEVAPHRERSALPTPHEIRNHLDDYVIGQEQAKKVLAVAVYNHYKRLRNGDTSNGVELGKSNILLIGPTGSGKTLLAETLARLLDVPFTMADATTLTEAGYVGEDVENIIQKLLQKCDYDVQKAQRGIVYIDEIDKISRKSDNPSITRDVSGEGVQQALLKLIEGTVAAVPPQGGRKHPQQEFLQVDTSKILFICGGAFAGLDKVISHRVETGSGIGFGATVKAKSDKASEGELLAQVEPEDLIKFGLIPEFIGRLPVVATLNELSEEALIQILKEPKNALTKQYQALFNLEGVDLEFRDEALDAIAKKAMARKTGARGLRSIVEAALLDTMYDLPSMEDVEKVVIDESVIDGQSKPLLIYGKPEAQQASGE</sequence>
<comment type="function">
    <text evidence="1">ATP-dependent specificity component of the Clp protease. It directs the protease to specific substrates. Can perform chaperone functions in the absence of ClpP.</text>
</comment>
<comment type="subunit">
    <text evidence="1">Component of the ClpX-ClpP complex. Forms a hexameric ring that, in the presence of ATP, binds to fourteen ClpP subunits assembled into a disk-like structure with a central cavity, resembling the structure of eukaryotic proteasomes.</text>
</comment>
<comment type="similarity">
    <text evidence="1">Belongs to the ClpX chaperone family.</text>
</comment>